<proteinExistence type="inferred from homology"/>
<feature type="chain" id="PRO_0000047853" description="DNA-directed RNA polymerase subunit beta">
    <location>
        <begin position="1"/>
        <end position="1394"/>
    </location>
</feature>
<accession>Q9AIU3</accession>
<dbReference type="EC" id="2.7.7.6" evidence="1"/>
<dbReference type="EMBL" id="AF237414">
    <property type="protein sequence ID" value="AAK15035.1"/>
    <property type="molecule type" value="Genomic_DNA"/>
</dbReference>
<dbReference type="SMR" id="Q9AIU3"/>
<dbReference type="GO" id="GO:0000428">
    <property type="term" value="C:DNA-directed RNA polymerase complex"/>
    <property type="evidence" value="ECO:0007669"/>
    <property type="project" value="UniProtKB-KW"/>
</dbReference>
<dbReference type="GO" id="GO:0003677">
    <property type="term" value="F:DNA binding"/>
    <property type="evidence" value="ECO:0007669"/>
    <property type="project" value="UniProtKB-UniRule"/>
</dbReference>
<dbReference type="GO" id="GO:0003899">
    <property type="term" value="F:DNA-directed RNA polymerase activity"/>
    <property type="evidence" value="ECO:0007669"/>
    <property type="project" value="UniProtKB-UniRule"/>
</dbReference>
<dbReference type="GO" id="GO:0032549">
    <property type="term" value="F:ribonucleoside binding"/>
    <property type="evidence" value="ECO:0007669"/>
    <property type="project" value="InterPro"/>
</dbReference>
<dbReference type="GO" id="GO:0006351">
    <property type="term" value="P:DNA-templated transcription"/>
    <property type="evidence" value="ECO:0007669"/>
    <property type="project" value="UniProtKB-UniRule"/>
</dbReference>
<dbReference type="CDD" id="cd00653">
    <property type="entry name" value="RNA_pol_B_RPB2"/>
    <property type="match status" value="1"/>
</dbReference>
<dbReference type="Gene3D" id="2.40.50.100">
    <property type="match status" value="1"/>
</dbReference>
<dbReference type="Gene3D" id="2.40.50.150">
    <property type="match status" value="1"/>
</dbReference>
<dbReference type="Gene3D" id="3.90.1100.10">
    <property type="match status" value="2"/>
</dbReference>
<dbReference type="Gene3D" id="2.30.150.10">
    <property type="entry name" value="DNA-directed RNA polymerase, beta subunit, external 1 domain"/>
    <property type="match status" value="1"/>
</dbReference>
<dbReference type="Gene3D" id="2.40.270.10">
    <property type="entry name" value="DNA-directed RNA polymerase, subunit 2, domain 6"/>
    <property type="match status" value="2"/>
</dbReference>
<dbReference type="Gene3D" id="3.90.1800.10">
    <property type="entry name" value="RNA polymerase alpha subunit dimerisation domain"/>
    <property type="match status" value="1"/>
</dbReference>
<dbReference type="Gene3D" id="3.90.1110.10">
    <property type="entry name" value="RNA polymerase Rpb2, domain 2"/>
    <property type="match status" value="2"/>
</dbReference>
<dbReference type="HAMAP" id="MF_01321">
    <property type="entry name" value="RNApol_bact_RpoB"/>
    <property type="match status" value="1"/>
</dbReference>
<dbReference type="InterPro" id="IPR042107">
    <property type="entry name" value="DNA-dir_RNA_pol_bsu_ext_1_sf"/>
</dbReference>
<dbReference type="InterPro" id="IPR019462">
    <property type="entry name" value="DNA-dir_RNA_pol_bsu_external_1"/>
</dbReference>
<dbReference type="InterPro" id="IPR015712">
    <property type="entry name" value="DNA-dir_RNA_pol_su2"/>
</dbReference>
<dbReference type="InterPro" id="IPR007120">
    <property type="entry name" value="DNA-dir_RNAP_su2_dom"/>
</dbReference>
<dbReference type="InterPro" id="IPR037033">
    <property type="entry name" value="DNA-dir_RNAP_su2_hyb_sf"/>
</dbReference>
<dbReference type="InterPro" id="IPR010243">
    <property type="entry name" value="RNA_pol_bsu_bac"/>
</dbReference>
<dbReference type="InterPro" id="IPR007121">
    <property type="entry name" value="RNA_pol_bsu_CS"/>
</dbReference>
<dbReference type="InterPro" id="IPR007644">
    <property type="entry name" value="RNA_pol_bsu_protrusion"/>
</dbReference>
<dbReference type="InterPro" id="IPR007642">
    <property type="entry name" value="RNA_pol_Rpb2_2"/>
</dbReference>
<dbReference type="InterPro" id="IPR037034">
    <property type="entry name" value="RNA_pol_Rpb2_2_sf"/>
</dbReference>
<dbReference type="InterPro" id="IPR007645">
    <property type="entry name" value="RNA_pol_Rpb2_3"/>
</dbReference>
<dbReference type="InterPro" id="IPR007641">
    <property type="entry name" value="RNA_pol_Rpb2_7"/>
</dbReference>
<dbReference type="InterPro" id="IPR014724">
    <property type="entry name" value="RNA_pol_RPB2_OB-fold"/>
</dbReference>
<dbReference type="NCBIfam" id="NF001616">
    <property type="entry name" value="PRK00405.1"/>
    <property type="match status" value="1"/>
</dbReference>
<dbReference type="NCBIfam" id="TIGR02013">
    <property type="entry name" value="rpoB"/>
    <property type="match status" value="1"/>
</dbReference>
<dbReference type="PANTHER" id="PTHR20856">
    <property type="entry name" value="DNA-DIRECTED RNA POLYMERASE I SUBUNIT 2"/>
    <property type="match status" value="1"/>
</dbReference>
<dbReference type="Pfam" id="PF04563">
    <property type="entry name" value="RNA_pol_Rpb2_1"/>
    <property type="match status" value="1"/>
</dbReference>
<dbReference type="Pfam" id="PF04561">
    <property type="entry name" value="RNA_pol_Rpb2_2"/>
    <property type="match status" value="2"/>
</dbReference>
<dbReference type="Pfam" id="PF04565">
    <property type="entry name" value="RNA_pol_Rpb2_3"/>
    <property type="match status" value="1"/>
</dbReference>
<dbReference type="Pfam" id="PF10385">
    <property type="entry name" value="RNA_pol_Rpb2_45"/>
    <property type="match status" value="1"/>
</dbReference>
<dbReference type="Pfam" id="PF00562">
    <property type="entry name" value="RNA_pol_Rpb2_6"/>
    <property type="match status" value="1"/>
</dbReference>
<dbReference type="Pfam" id="PF04560">
    <property type="entry name" value="RNA_pol_Rpb2_7"/>
    <property type="match status" value="1"/>
</dbReference>
<dbReference type="SUPFAM" id="SSF64484">
    <property type="entry name" value="beta and beta-prime subunits of DNA dependent RNA-polymerase"/>
    <property type="match status" value="1"/>
</dbReference>
<dbReference type="PROSITE" id="PS01166">
    <property type="entry name" value="RNA_POL_BETA"/>
    <property type="match status" value="1"/>
</dbReference>
<organism>
    <name type="scientific">Anaplasma phagocytophilum</name>
    <name type="common">Ehrlichia phagocytophila</name>
    <dbReference type="NCBI Taxonomy" id="948"/>
    <lineage>
        <taxon>Bacteria</taxon>
        <taxon>Pseudomonadati</taxon>
        <taxon>Pseudomonadota</taxon>
        <taxon>Alphaproteobacteria</taxon>
        <taxon>Rickettsiales</taxon>
        <taxon>Anaplasmataceae</taxon>
        <taxon>Anaplasma</taxon>
        <taxon>phagocytophilum group</taxon>
    </lineage>
</organism>
<name>RPOB_ANAPH</name>
<reference key="1">
    <citation type="journal article" date="2003" name="Int. J. Syst. Evol. Microbiol.">
        <title>RNA polymerase beta-subunit-based phylogeny of Ehrlichia spp., Anaplasma spp., Neorickettsia spp. and Wolbachia pipientis.</title>
        <authorList>
            <person name="Taillardat-Bisch A.V."/>
            <person name="Raoult D."/>
            <person name="Drancourt M."/>
        </authorList>
    </citation>
    <scope>NUCLEOTIDE SEQUENCE [GENOMIC DNA]</scope>
    <source>
        <strain>Webster</strain>
    </source>
</reference>
<protein>
    <recommendedName>
        <fullName evidence="1">DNA-directed RNA polymerase subunit beta</fullName>
        <shortName evidence="1">RNAP subunit beta</shortName>
        <ecNumber evidence="1">2.7.7.6</ecNumber>
    </recommendedName>
    <alternativeName>
        <fullName evidence="1">RNA polymerase subunit beta</fullName>
    </alternativeName>
    <alternativeName>
        <fullName evidence="1">Transcriptase subunit beta</fullName>
    </alternativeName>
</protein>
<gene>
    <name evidence="1" type="primary">rpoB</name>
</gene>
<evidence type="ECO:0000255" key="1">
    <source>
        <dbReference type="HAMAP-Rule" id="MF_01321"/>
    </source>
</evidence>
<comment type="function">
    <text evidence="1">DNA-dependent RNA polymerase catalyzes the transcription of DNA into RNA using the four ribonucleoside triphosphates as substrates.</text>
</comment>
<comment type="catalytic activity">
    <reaction evidence="1">
        <text>RNA(n) + a ribonucleoside 5'-triphosphate = RNA(n+1) + diphosphate</text>
        <dbReference type="Rhea" id="RHEA:21248"/>
        <dbReference type="Rhea" id="RHEA-COMP:14527"/>
        <dbReference type="Rhea" id="RHEA-COMP:17342"/>
        <dbReference type="ChEBI" id="CHEBI:33019"/>
        <dbReference type="ChEBI" id="CHEBI:61557"/>
        <dbReference type="ChEBI" id="CHEBI:140395"/>
        <dbReference type="EC" id="2.7.7.6"/>
    </reaction>
</comment>
<comment type="subunit">
    <text evidence="1">The RNAP catalytic core consists of 2 alpha, 1 beta, 1 beta' and 1 omega subunit. When a sigma factor is associated with the core the holoenzyme is formed, which can initiate transcription.</text>
</comment>
<comment type="similarity">
    <text evidence="1">Belongs to the RNA polymerase beta chain family.</text>
</comment>
<keyword id="KW-0240">DNA-directed RNA polymerase</keyword>
<keyword id="KW-0548">Nucleotidyltransferase</keyword>
<keyword id="KW-0804">Transcription</keyword>
<keyword id="KW-0808">Transferase</keyword>
<sequence>MVFGELMSSAGDSGPGYVLNDFDAVPRLSYARSIDIRDSLSDLIRIQRDSYDAFIGIDEGSSGGIQSIFQSMFPIRDPLGRAVLEFVSCNIGEPQYDEYECIKRGITFSVPMRITLRFVVWKVQEVSFKEVKYVVDEGTLERSVKYMKEQEVSIGDLPMMTSYGTFIINGIERVIVSQMHRSPGVFFDSDKGKTYSSGKLIYSARIIPYRGSWLDFEFDIKDIIYFRIDKKRKLPVTYLLKALGMSNNDILDTFYDKVLYVRSDKGWKVPFVVDRFKGVRLSYDLMDVDGNVLIKANTRITLRIAKKLYADGLREYLVPFAGISGLFVATDLVDPASGAVIVSAGEAIAAEHIVKLELFDISEIAFLNIDFLTVGPYVLNTLFLDRHITQEDALFEIYRVLRSGESPNLEAVKSFFKGLFFEPDRYDLSVVGRIKLNSHLRLDIDENLTVLTKDDIVHVIKKLVLLRDGEGVVDDIDHLGNRRVRSVGEFIENQFRVGILRLERMIMDYMSSVNFDNAVPCDFVNPKILATVLKDFFSSSQLSQFMDQTNPLSEVTHKRRLSALGPGGLTRERAGFEVRDVHPTHYGRICPIETPEGQNIGLISSLAIYAKINKYGFIESPYRKVIDGVVTDSVEYLLATQESDYYIADAGAALDENNRFVDDMLYCRHGGNFVMVKREDVNYIDVSPKQIVSVAASLIPFLENNDANRALMGSNMQRQAVPLLKAEAPLVGTGMESVVAAGSGAVVLAKRDGVLHRVDRVLYPVIRAFDKNKDSILVLIYTTEKVQRSNHNTCINQRPIVKIGDYVRTNDVIADGAAIDRGELALGKNVLVAFMSWQGCNFEDSIVISSDVVKRDVFTSIHIEEFECVVRDTPLGPEKIMRSVPDVNEESLSHLDDVGIVNIGAEVSAGSVLVGKVTPRPPVSLPPETKLLVTIFGEKVFDCVDSSLYLPPDVEGTVIDVHVFVRRGVEENDRSLLIKQSEVNSFRKERDYEIDVVSEYFYDELKKLLCSADLPLNGHADVESLLAAKSLEALWEIGLSNPKISAKVADMKGKFDELITEAHSKFDQKIDKLNYGYDLPQGVLTIVKVFVAVKHNLQPGDKMAGRHGNKGVISRIVPVEDMPHLEDGTPVDIILNSLGVPSRMNIGQILETHLGWAAVNLGHRVGRMLDSGEEEGPVVERIRSFLSEVYEGQKLKEDVASMSDEALLKFANRLRRGVPMAAPVFEGPKDAQISRLLELADVDPSGQVDLYDGRSGQKFDRKVTVGYIYMLKLHHLVDDKIHARSVGPYGLVTQQPLGGKSHFGGQRFGEMECWALQAYGAAYTLQEMLTVKSDDTSPGRRPRVPYSESYYIKGDSNFECGIPESFNVMVKELRSLCLDVVLKHDKEFTSSNVE</sequence>